<organism>
    <name type="scientific">Legionella pneumophila subsp. pneumophila (strain Philadelphia 1 / ATCC 33152 / DSM 7513)</name>
    <dbReference type="NCBI Taxonomy" id="272624"/>
    <lineage>
        <taxon>Bacteria</taxon>
        <taxon>Pseudomonadati</taxon>
        <taxon>Pseudomonadota</taxon>
        <taxon>Gammaproteobacteria</taxon>
        <taxon>Legionellales</taxon>
        <taxon>Legionellaceae</taxon>
        <taxon>Legionella</taxon>
    </lineage>
</organism>
<evidence type="ECO:0000255" key="1">
    <source>
        <dbReference type="HAMAP-Rule" id="MF_00133"/>
    </source>
</evidence>
<name>TRPB_LEGPH</name>
<dbReference type="EC" id="4.2.1.20" evidence="1"/>
<dbReference type="EMBL" id="AE017354">
    <property type="protein sequence ID" value="AAU27387.1"/>
    <property type="molecule type" value="Genomic_DNA"/>
</dbReference>
<dbReference type="RefSeq" id="WP_010947035.1">
    <property type="nucleotide sequence ID" value="NC_002942.5"/>
</dbReference>
<dbReference type="RefSeq" id="YP_095334.1">
    <property type="nucleotide sequence ID" value="NC_002942.5"/>
</dbReference>
<dbReference type="SMR" id="Q5ZVY4"/>
<dbReference type="STRING" id="272624.lpg1304"/>
<dbReference type="PaxDb" id="272624-lpg1304"/>
<dbReference type="GeneID" id="57035297"/>
<dbReference type="KEGG" id="lpn:lpg1304"/>
<dbReference type="PATRIC" id="fig|272624.6.peg.1374"/>
<dbReference type="eggNOG" id="COG0133">
    <property type="taxonomic scope" value="Bacteria"/>
</dbReference>
<dbReference type="HOGENOM" id="CLU_016734_3_1_6"/>
<dbReference type="OrthoDB" id="9766131at2"/>
<dbReference type="UniPathway" id="UPA00035">
    <property type="reaction ID" value="UER00044"/>
</dbReference>
<dbReference type="Proteomes" id="UP000000609">
    <property type="component" value="Chromosome"/>
</dbReference>
<dbReference type="GO" id="GO:0005737">
    <property type="term" value="C:cytoplasm"/>
    <property type="evidence" value="ECO:0007669"/>
    <property type="project" value="TreeGrafter"/>
</dbReference>
<dbReference type="GO" id="GO:0004834">
    <property type="term" value="F:tryptophan synthase activity"/>
    <property type="evidence" value="ECO:0007669"/>
    <property type="project" value="UniProtKB-UniRule"/>
</dbReference>
<dbReference type="CDD" id="cd06446">
    <property type="entry name" value="Trp-synth_B"/>
    <property type="match status" value="1"/>
</dbReference>
<dbReference type="FunFam" id="3.40.50.1100:FF:000001">
    <property type="entry name" value="Tryptophan synthase beta chain"/>
    <property type="match status" value="1"/>
</dbReference>
<dbReference type="FunFam" id="3.40.50.1100:FF:000004">
    <property type="entry name" value="Tryptophan synthase beta chain"/>
    <property type="match status" value="1"/>
</dbReference>
<dbReference type="Gene3D" id="3.40.50.1100">
    <property type="match status" value="2"/>
</dbReference>
<dbReference type="HAMAP" id="MF_00133">
    <property type="entry name" value="Trp_synth_beta"/>
    <property type="match status" value="1"/>
</dbReference>
<dbReference type="InterPro" id="IPR006653">
    <property type="entry name" value="Trp_synth_b_CS"/>
</dbReference>
<dbReference type="InterPro" id="IPR006654">
    <property type="entry name" value="Trp_synth_beta"/>
</dbReference>
<dbReference type="InterPro" id="IPR023026">
    <property type="entry name" value="Trp_synth_beta/beta-like"/>
</dbReference>
<dbReference type="InterPro" id="IPR001926">
    <property type="entry name" value="TrpB-like_PALP"/>
</dbReference>
<dbReference type="InterPro" id="IPR036052">
    <property type="entry name" value="TrpB-like_PALP_sf"/>
</dbReference>
<dbReference type="NCBIfam" id="TIGR00263">
    <property type="entry name" value="trpB"/>
    <property type="match status" value="1"/>
</dbReference>
<dbReference type="PANTHER" id="PTHR48077:SF3">
    <property type="entry name" value="TRYPTOPHAN SYNTHASE"/>
    <property type="match status" value="1"/>
</dbReference>
<dbReference type="PANTHER" id="PTHR48077">
    <property type="entry name" value="TRYPTOPHAN SYNTHASE-RELATED"/>
    <property type="match status" value="1"/>
</dbReference>
<dbReference type="Pfam" id="PF00291">
    <property type="entry name" value="PALP"/>
    <property type="match status" value="1"/>
</dbReference>
<dbReference type="PIRSF" id="PIRSF001413">
    <property type="entry name" value="Trp_syn_beta"/>
    <property type="match status" value="1"/>
</dbReference>
<dbReference type="SUPFAM" id="SSF53686">
    <property type="entry name" value="Tryptophan synthase beta subunit-like PLP-dependent enzymes"/>
    <property type="match status" value="1"/>
</dbReference>
<dbReference type="PROSITE" id="PS00168">
    <property type="entry name" value="TRP_SYNTHASE_BETA"/>
    <property type="match status" value="1"/>
</dbReference>
<proteinExistence type="inferred from homology"/>
<accession>Q5ZVY4</accession>
<reference key="1">
    <citation type="journal article" date="2004" name="Science">
        <title>The genomic sequence of the accidental pathogen Legionella pneumophila.</title>
        <authorList>
            <person name="Chien M."/>
            <person name="Morozova I."/>
            <person name="Shi S."/>
            <person name="Sheng H."/>
            <person name="Chen J."/>
            <person name="Gomez S.M."/>
            <person name="Asamani G."/>
            <person name="Hill K."/>
            <person name="Nuara J."/>
            <person name="Feder M."/>
            <person name="Rineer J."/>
            <person name="Greenberg J.J."/>
            <person name="Steshenko V."/>
            <person name="Park S.H."/>
            <person name="Zhao B."/>
            <person name="Teplitskaya E."/>
            <person name="Edwards J.R."/>
            <person name="Pampou S."/>
            <person name="Georghiou A."/>
            <person name="Chou I.-C."/>
            <person name="Iannuccilli W."/>
            <person name="Ulz M.E."/>
            <person name="Kim D.H."/>
            <person name="Geringer-Sameth A."/>
            <person name="Goldsberry C."/>
            <person name="Morozov P."/>
            <person name="Fischer S.G."/>
            <person name="Segal G."/>
            <person name="Qu X."/>
            <person name="Rzhetsky A."/>
            <person name="Zhang P."/>
            <person name="Cayanis E."/>
            <person name="De Jong P.J."/>
            <person name="Ju J."/>
            <person name="Kalachikov S."/>
            <person name="Shuman H.A."/>
            <person name="Russo J.J."/>
        </authorList>
    </citation>
    <scope>NUCLEOTIDE SEQUENCE [LARGE SCALE GENOMIC DNA]</scope>
    <source>
        <strain>Philadelphia 1 / ATCC 33152 / DSM 7513</strain>
    </source>
</reference>
<protein>
    <recommendedName>
        <fullName evidence="1">Tryptophan synthase beta chain</fullName>
        <ecNumber evidence="1">4.2.1.20</ecNumber>
    </recommendedName>
</protein>
<sequence length="399" mass="43300">MIKKELPDEFGHFGPYGGMFVADTLVHALKQLEHAYTKYRNDQDFLSELHTELKDYVGRPNPLYHAVHLSKKIGGAQIYLKREDLNHTGAHKINNTIGQALLAKRMGKTRVIAETGAGQHGVATATVAAKFGFQCVVYMGSEDIKRQSSNVYRMKLLGAEVVPVTSGSKTLKDALNEALRDWVSHVDDTFYIIGTVAGPHPYPQMVRDFQAIIGVEARAQHMEKTGHLPDALVACVGGGSNAIGLFYPFLNDQSVMIYGVEAGGKGIETGEHSASLIAGKPGVLHGNRTYLLCDEYGQVKDTHSVSAGLDYPGVGPEHAYLKDTGRVIYKAINDSEAMDAFRLLTHTEGIIPALESSHAVAYAIQLAKTMSKEQSIIVNLSGRGDKDMHTVAAIDGITI</sequence>
<keyword id="KW-0028">Amino-acid biosynthesis</keyword>
<keyword id="KW-0057">Aromatic amino acid biosynthesis</keyword>
<keyword id="KW-0456">Lyase</keyword>
<keyword id="KW-0663">Pyridoxal phosphate</keyword>
<keyword id="KW-1185">Reference proteome</keyword>
<keyword id="KW-0822">Tryptophan biosynthesis</keyword>
<gene>
    <name evidence="1" type="primary">trpB</name>
    <name type="ordered locus">lpg1304</name>
</gene>
<feature type="chain" id="PRO_1000076394" description="Tryptophan synthase beta chain">
    <location>
        <begin position="1"/>
        <end position="399"/>
    </location>
</feature>
<feature type="modified residue" description="N6-(pyridoxal phosphate)lysine" evidence="1">
    <location>
        <position position="92"/>
    </location>
</feature>
<comment type="function">
    <text evidence="1">The beta subunit is responsible for the synthesis of L-tryptophan from indole and L-serine.</text>
</comment>
<comment type="catalytic activity">
    <reaction evidence="1">
        <text>(1S,2R)-1-C-(indol-3-yl)glycerol 3-phosphate + L-serine = D-glyceraldehyde 3-phosphate + L-tryptophan + H2O</text>
        <dbReference type="Rhea" id="RHEA:10532"/>
        <dbReference type="ChEBI" id="CHEBI:15377"/>
        <dbReference type="ChEBI" id="CHEBI:33384"/>
        <dbReference type="ChEBI" id="CHEBI:57912"/>
        <dbReference type="ChEBI" id="CHEBI:58866"/>
        <dbReference type="ChEBI" id="CHEBI:59776"/>
        <dbReference type="EC" id="4.2.1.20"/>
    </reaction>
</comment>
<comment type="cofactor">
    <cofactor evidence="1">
        <name>pyridoxal 5'-phosphate</name>
        <dbReference type="ChEBI" id="CHEBI:597326"/>
    </cofactor>
</comment>
<comment type="pathway">
    <text evidence="1">Amino-acid biosynthesis; L-tryptophan biosynthesis; L-tryptophan from chorismate: step 5/5.</text>
</comment>
<comment type="subunit">
    <text evidence="1">Tetramer of two alpha and two beta chains.</text>
</comment>
<comment type="similarity">
    <text evidence="1">Belongs to the TrpB family.</text>
</comment>